<comment type="function">
    <text evidence="3">Component of the ubiquinol-cytochrome c reductase complex (complex III or cytochrome b-c1 complex) that is part of the mitochondrial respiratory chain. The b-c1 complex mediates electron transfer from ubiquinol to cytochrome c. Contributes to the generation of a proton gradient across the mitochondrial membrane that is then used for ATP synthesis.</text>
</comment>
<comment type="cofactor">
    <cofactor evidence="3">
        <name>heme b</name>
        <dbReference type="ChEBI" id="CHEBI:60344"/>
    </cofactor>
    <text evidence="3">Binds 2 heme b groups non-covalently.</text>
</comment>
<comment type="subunit">
    <text evidence="1">The main subunits of complex b-c1 are: cytochrome b, cytochrome c1 and the Rieske protein.</text>
</comment>
<comment type="subcellular location">
    <subcellularLocation>
        <location evidence="3">Mitochondrion inner membrane</location>
        <topology evidence="3">Multi-pass membrane protein</topology>
    </subcellularLocation>
</comment>
<comment type="miscellaneous">
    <text evidence="1">Heme 1 (or BL or b562) is low-potential and absorbs at about 562 nm, and heme 2 (or BH or b566) is high-potential and absorbs at about 566 nm.</text>
</comment>
<comment type="similarity">
    <text evidence="4 5">Belongs to the cytochrome b family.</text>
</comment>
<comment type="caution">
    <text evidence="3">The protein contains only eight transmembrane helices, not nine as predicted by bioinformatics tools.</text>
</comment>
<reference key="1">
    <citation type="thesis" date="1995" institute="Justus Liebig University / Frankfurt" country="Germany">
        <authorList>
            <person name="Viehmann S."/>
        </authorList>
    </citation>
    <scope>NUCLEOTIDE SEQUENCE [GENOMIC DNA]</scope>
    <source>
        <strain>RK-1</strain>
    </source>
</reference>
<evidence type="ECO:0000250" key="1"/>
<evidence type="ECO:0000250" key="2">
    <source>
        <dbReference type="UniProtKB" id="P00157"/>
    </source>
</evidence>
<evidence type="ECO:0000250" key="3">
    <source>
        <dbReference type="UniProtKB" id="P00163"/>
    </source>
</evidence>
<evidence type="ECO:0000255" key="4">
    <source>
        <dbReference type="PROSITE-ProRule" id="PRU00967"/>
    </source>
</evidence>
<evidence type="ECO:0000255" key="5">
    <source>
        <dbReference type="PROSITE-ProRule" id="PRU00968"/>
    </source>
</evidence>
<organism>
    <name type="scientific">Cyanidium caldarium</name>
    <name type="common">Red alga</name>
    <dbReference type="NCBI Taxonomy" id="2771"/>
    <lineage>
        <taxon>Eukaryota</taxon>
        <taxon>Rhodophyta</taxon>
        <taxon>Bangiophyceae</taxon>
        <taxon>Cyanidiales</taxon>
        <taxon>Cyanidiaceae</taxon>
        <taxon>Cyanidium</taxon>
    </lineage>
</organism>
<proteinExistence type="inferred from homology"/>
<protein>
    <recommendedName>
        <fullName>Cytochrome b</fullName>
    </recommendedName>
    <alternativeName>
        <fullName>Complex III subunit 3</fullName>
    </alternativeName>
    <alternativeName>
        <fullName>Complex III subunit III</fullName>
    </alternativeName>
    <alternativeName>
        <fullName>Cytochrome b-c1 complex subunit 3</fullName>
    </alternativeName>
    <alternativeName>
        <fullName>Ubiquinol-cytochrome-c reductase complex cytochrome b subunit</fullName>
    </alternativeName>
</protein>
<gene>
    <name type="primary">MT-CYB</name>
    <name type="synonym">COB</name>
    <name type="synonym">CYTB</name>
    <name type="synonym">MTCYB</name>
</gene>
<sequence length="384" mass="44357">MVQFFKRPLLDIVHNHLIEYPTPVNIHYFWNFGFLAFICLAVQIITGIFLAIHYTPHVDLAFYSVEHIIRDVNYGWLLRYAHANGASIFFIIIYIHISRGLYYGSYVAPRHFTWVVGVFILLLIMATAFMGYVLPWGQISLWGATVITNLVSAVPLVGNSIVTWLWGGFSVDNATLNRFFSFHYLFPFIIVAIAFVHMAFLHQKGSGNPLGLIQPVDKISMYPYFIIKDAFGLVLFLLFFSLFVYFLPNLLGHPDNYIEANPIVTPNHIVPEWYFLPFYAILRSIPHKLGGVIAIIISILILAFLPWITNINVRSSLFRPLYKKLFWILFSIVLILGWIGGKPVEMPYVVIGQLITFLYFVYFLIFIPFLGRLEKFLVNYKTVY</sequence>
<dbReference type="EMBL" id="Z48930">
    <property type="protein sequence ID" value="CAA88768.1"/>
    <property type="molecule type" value="Genomic_DNA"/>
</dbReference>
<dbReference type="PIR" id="S62758">
    <property type="entry name" value="S62758"/>
</dbReference>
<dbReference type="SMR" id="P48876"/>
<dbReference type="GO" id="GO:0005743">
    <property type="term" value="C:mitochondrial inner membrane"/>
    <property type="evidence" value="ECO:0007669"/>
    <property type="project" value="UniProtKB-SubCell"/>
</dbReference>
<dbReference type="GO" id="GO:0045275">
    <property type="term" value="C:respiratory chain complex III"/>
    <property type="evidence" value="ECO:0007669"/>
    <property type="project" value="InterPro"/>
</dbReference>
<dbReference type="GO" id="GO:0046872">
    <property type="term" value="F:metal ion binding"/>
    <property type="evidence" value="ECO:0007669"/>
    <property type="project" value="UniProtKB-KW"/>
</dbReference>
<dbReference type="GO" id="GO:0008121">
    <property type="term" value="F:ubiquinol-cytochrome-c reductase activity"/>
    <property type="evidence" value="ECO:0007669"/>
    <property type="project" value="InterPro"/>
</dbReference>
<dbReference type="GO" id="GO:0006122">
    <property type="term" value="P:mitochondrial electron transport, ubiquinol to cytochrome c"/>
    <property type="evidence" value="ECO:0007669"/>
    <property type="project" value="TreeGrafter"/>
</dbReference>
<dbReference type="CDD" id="cd00290">
    <property type="entry name" value="cytochrome_b_C"/>
    <property type="match status" value="1"/>
</dbReference>
<dbReference type="CDD" id="cd00284">
    <property type="entry name" value="Cytochrome_b_N"/>
    <property type="match status" value="1"/>
</dbReference>
<dbReference type="Gene3D" id="1.20.810.10">
    <property type="entry name" value="Cytochrome Bc1 Complex, Chain C"/>
    <property type="match status" value="1"/>
</dbReference>
<dbReference type="InterPro" id="IPR005798">
    <property type="entry name" value="Cyt_b/b6_C"/>
</dbReference>
<dbReference type="InterPro" id="IPR036150">
    <property type="entry name" value="Cyt_b/b6_C_sf"/>
</dbReference>
<dbReference type="InterPro" id="IPR005797">
    <property type="entry name" value="Cyt_b/b6_N"/>
</dbReference>
<dbReference type="InterPro" id="IPR027387">
    <property type="entry name" value="Cytb/b6-like_sf"/>
</dbReference>
<dbReference type="InterPro" id="IPR030689">
    <property type="entry name" value="Cytochrome_b"/>
</dbReference>
<dbReference type="InterPro" id="IPR048260">
    <property type="entry name" value="Cytochrome_b_C_euk/bac"/>
</dbReference>
<dbReference type="InterPro" id="IPR048259">
    <property type="entry name" value="Cytochrome_b_N_euk/bac"/>
</dbReference>
<dbReference type="InterPro" id="IPR016174">
    <property type="entry name" value="Di-haem_cyt_TM"/>
</dbReference>
<dbReference type="PANTHER" id="PTHR19271">
    <property type="entry name" value="CYTOCHROME B"/>
    <property type="match status" value="1"/>
</dbReference>
<dbReference type="PANTHER" id="PTHR19271:SF16">
    <property type="entry name" value="CYTOCHROME B"/>
    <property type="match status" value="1"/>
</dbReference>
<dbReference type="Pfam" id="PF00032">
    <property type="entry name" value="Cytochrom_B_C"/>
    <property type="match status" value="1"/>
</dbReference>
<dbReference type="Pfam" id="PF00033">
    <property type="entry name" value="Cytochrome_B"/>
    <property type="match status" value="1"/>
</dbReference>
<dbReference type="PIRSF" id="PIRSF038885">
    <property type="entry name" value="COB"/>
    <property type="match status" value="1"/>
</dbReference>
<dbReference type="SUPFAM" id="SSF81648">
    <property type="entry name" value="a domain/subunit of cytochrome bc1 complex (Ubiquinol-cytochrome c reductase)"/>
    <property type="match status" value="1"/>
</dbReference>
<dbReference type="SUPFAM" id="SSF81342">
    <property type="entry name" value="Transmembrane di-heme cytochromes"/>
    <property type="match status" value="1"/>
</dbReference>
<dbReference type="PROSITE" id="PS51003">
    <property type="entry name" value="CYTB_CTER"/>
    <property type="match status" value="1"/>
</dbReference>
<dbReference type="PROSITE" id="PS51002">
    <property type="entry name" value="CYTB_NTER"/>
    <property type="match status" value="1"/>
</dbReference>
<name>CYB_CYACA</name>
<feature type="chain" id="PRO_0000060843" description="Cytochrome b">
    <location>
        <begin position="1"/>
        <end position="384"/>
    </location>
</feature>
<feature type="transmembrane region" description="Helical" evidence="3">
    <location>
        <begin position="32"/>
        <end position="52"/>
    </location>
</feature>
<feature type="transmembrane region" description="Helical" evidence="3">
    <location>
        <begin position="76"/>
        <end position="98"/>
    </location>
</feature>
<feature type="transmembrane region" description="Helical" evidence="3">
    <location>
        <begin position="113"/>
        <end position="133"/>
    </location>
</feature>
<feature type="transmembrane region" description="Helical" evidence="3">
    <location>
        <begin position="179"/>
        <end position="199"/>
    </location>
</feature>
<feature type="transmembrane region" description="Helical" evidence="3">
    <location>
        <begin position="225"/>
        <end position="245"/>
    </location>
</feature>
<feature type="transmembrane region" description="Helical" evidence="3">
    <location>
        <begin position="289"/>
        <end position="309"/>
    </location>
</feature>
<feature type="transmembrane region" description="Helical" evidence="3">
    <location>
        <begin position="321"/>
        <end position="341"/>
    </location>
</feature>
<feature type="transmembrane region" description="Helical" evidence="3">
    <location>
        <begin position="348"/>
        <end position="368"/>
    </location>
</feature>
<feature type="binding site" description="axial binding residue" evidence="3">
    <location>
        <position position="82"/>
    </location>
    <ligand>
        <name>heme b</name>
        <dbReference type="ChEBI" id="CHEBI:60344"/>
        <label>b562</label>
    </ligand>
    <ligandPart>
        <name>Fe</name>
        <dbReference type="ChEBI" id="CHEBI:18248"/>
    </ligandPart>
</feature>
<feature type="binding site" description="axial binding residue" evidence="3">
    <location>
        <position position="96"/>
    </location>
    <ligand>
        <name>heme b</name>
        <dbReference type="ChEBI" id="CHEBI:60344"/>
        <label>b566</label>
    </ligand>
    <ligandPart>
        <name>Fe</name>
        <dbReference type="ChEBI" id="CHEBI:18248"/>
    </ligandPart>
</feature>
<feature type="binding site" description="axial binding residue" evidence="3">
    <location>
        <position position="183"/>
    </location>
    <ligand>
        <name>heme b</name>
        <dbReference type="ChEBI" id="CHEBI:60344"/>
        <label>b562</label>
    </ligand>
    <ligandPart>
        <name>Fe</name>
        <dbReference type="ChEBI" id="CHEBI:18248"/>
    </ligandPart>
</feature>
<feature type="binding site" description="axial binding residue" evidence="3">
    <location>
        <position position="197"/>
    </location>
    <ligand>
        <name>heme b</name>
        <dbReference type="ChEBI" id="CHEBI:60344"/>
        <label>b566</label>
    </ligand>
    <ligandPart>
        <name>Fe</name>
        <dbReference type="ChEBI" id="CHEBI:18248"/>
    </ligandPart>
</feature>
<feature type="binding site" evidence="2">
    <location>
        <position position="202"/>
    </location>
    <ligand>
        <name>a ubiquinone</name>
        <dbReference type="ChEBI" id="CHEBI:16389"/>
    </ligand>
</feature>
<geneLocation type="mitochondrion"/>
<keyword id="KW-0249">Electron transport</keyword>
<keyword id="KW-0349">Heme</keyword>
<keyword id="KW-0408">Iron</keyword>
<keyword id="KW-0472">Membrane</keyword>
<keyword id="KW-0479">Metal-binding</keyword>
<keyword id="KW-0496">Mitochondrion</keyword>
<keyword id="KW-0999">Mitochondrion inner membrane</keyword>
<keyword id="KW-0679">Respiratory chain</keyword>
<keyword id="KW-0812">Transmembrane</keyword>
<keyword id="KW-1133">Transmembrane helix</keyword>
<keyword id="KW-0813">Transport</keyword>
<keyword id="KW-0830">Ubiquinone</keyword>
<accession>P48876</accession>